<accession>Q83AF7</accession>
<proteinExistence type="evidence at protein level"/>
<organism>
    <name type="scientific">Coxiella burnetii (strain RSA 493 / Nine Mile phase I)</name>
    <dbReference type="NCBI Taxonomy" id="227377"/>
    <lineage>
        <taxon>Bacteria</taxon>
        <taxon>Pseudomonadati</taxon>
        <taxon>Pseudomonadota</taxon>
        <taxon>Gammaproteobacteria</taxon>
        <taxon>Legionellales</taxon>
        <taxon>Coxiellaceae</taxon>
        <taxon>Coxiella</taxon>
    </lineage>
</organism>
<feature type="chain" id="PRO_0000238237" description="ATP synthase subunit alpha">
    <location>
        <begin position="1"/>
        <end position="515"/>
    </location>
</feature>
<feature type="binding site" evidence="1">
    <location>
        <begin position="171"/>
        <end position="178"/>
    </location>
    <ligand>
        <name>ATP</name>
        <dbReference type="ChEBI" id="CHEBI:30616"/>
    </ligand>
</feature>
<feature type="site" description="Required for activity" evidence="1">
    <location>
        <position position="375"/>
    </location>
</feature>
<dbReference type="EC" id="7.1.2.2" evidence="1"/>
<dbReference type="EMBL" id="AE016828">
    <property type="protein sequence ID" value="AAO91433.1"/>
    <property type="molecule type" value="Genomic_DNA"/>
</dbReference>
<dbReference type="RefSeq" id="NP_820919.1">
    <property type="nucleotide sequence ID" value="NC_002971.4"/>
</dbReference>
<dbReference type="RefSeq" id="WP_005770035.1">
    <property type="nucleotide sequence ID" value="NZ_CDBG01000001.1"/>
</dbReference>
<dbReference type="SMR" id="Q83AF7"/>
<dbReference type="STRING" id="227377.CBU_1943"/>
<dbReference type="DNASU" id="1209856"/>
<dbReference type="EnsemblBacteria" id="AAO91433">
    <property type="protein sequence ID" value="AAO91433"/>
    <property type="gene ID" value="CBU_1943"/>
</dbReference>
<dbReference type="GeneID" id="1209856"/>
<dbReference type="KEGG" id="cbu:CBU_1943"/>
<dbReference type="PATRIC" id="fig|227377.7.peg.1929"/>
<dbReference type="eggNOG" id="COG0056">
    <property type="taxonomic scope" value="Bacteria"/>
</dbReference>
<dbReference type="HOGENOM" id="CLU_010091_2_1_6"/>
<dbReference type="OrthoDB" id="9803053at2"/>
<dbReference type="Proteomes" id="UP000002671">
    <property type="component" value="Chromosome"/>
</dbReference>
<dbReference type="GO" id="GO:0005886">
    <property type="term" value="C:plasma membrane"/>
    <property type="evidence" value="ECO:0007669"/>
    <property type="project" value="UniProtKB-SubCell"/>
</dbReference>
<dbReference type="GO" id="GO:0045259">
    <property type="term" value="C:proton-transporting ATP synthase complex"/>
    <property type="evidence" value="ECO:0007669"/>
    <property type="project" value="UniProtKB-KW"/>
</dbReference>
<dbReference type="GO" id="GO:0043531">
    <property type="term" value="F:ADP binding"/>
    <property type="evidence" value="ECO:0000318"/>
    <property type="project" value="GO_Central"/>
</dbReference>
<dbReference type="GO" id="GO:0005524">
    <property type="term" value="F:ATP binding"/>
    <property type="evidence" value="ECO:0000318"/>
    <property type="project" value="GO_Central"/>
</dbReference>
<dbReference type="GO" id="GO:0046933">
    <property type="term" value="F:proton-transporting ATP synthase activity, rotational mechanism"/>
    <property type="evidence" value="ECO:0007669"/>
    <property type="project" value="UniProtKB-UniRule"/>
</dbReference>
<dbReference type="GO" id="GO:0015986">
    <property type="term" value="P:proton motive force-driven ATP synthesis"/>
    <property type="evidence" value="ECO:0000318"/>
    <property type="project" value="GO_Central"/>
</dbReference>
<dbReference type="CDD" id="cd18113">
    <property type="entry name" value="ATP-synt_F1_alpha_C"/>
    <property type="match status" value="1"/>
</dbReference>
<dbReference type="CDD" id="cd18116">
    <property type="entry name" value="ATP-synt_F1_alpha_N"/>
    <property type="match status" value="1"/>
</dbReference>
<dbReference type="CDD" id="cd01132">
    <property type="entry name" value="F1-ATPase_alpha_CD"/>
    <property type="match status" value="1"/>
</dbReference>
<dbReference type="FunFam" id="1.20.150.20:FF:000001">
    <property type="entry name" value="ATP synthase subunit alpha"/>
    <property type="match status" value="1"/>
</dbReference>
<dbReference type="FunFam" id="2.40.30.20:FF:000001">
    <property type="entry name" value="ATP synthase subunit alpha"/>
    <property type="match status" value="1"/>
</dbReference>
<dbReference type="FunFam" id="3.40.50.300:FF:000002">
    <property type="entry name" value="ATP synthase subunit alpha"/>
    <property type="match status" value="1"/>
</dbReference>
<dbReference type="Gene3D" id="2.40.30.20">
    <property type="match status" value="1"/>
</dbReference>
<dbReference type="Gene3D" id="1.20.150.20">
    <property type="entry name" value="ATP synthase alpha/beta chain, C-terminal domain"/>
    <property type="match status" value="1"/>
</dbReference>
<dbReference type="Gene3D" id="3.40.50.300">
    <property type="entry name" value="P-loop containing nucleotide triphosphate hydrolases"/>
    <property type="match status" value="1"/>
</dbReference>
<dbReference type="HAMAP" id="MF_01346">
    <property type="entry name" value="ATP_synth_alpha_bact"/>
    <property type="match status" value="1"/>
</dbReference>
<dbReference type="InterPro" id="IPR023366">
    <property type="entry name" value="ATP_synth_asu-like_sf"/>
</dbReference>
<dbReference type="InterPro" id="IPR000793">
    <property type="entry name" value="ATP_synth_asu_C"/>
</dbReference>
<dbReference type="InterPro" id="IPR038376">
    <property type="entry name" value="ATP_synth_asu_C_sf"/>
</dbReference>
<dbReference type="InterPro" id="IPR033732">
    <property type="entry name" value="ATP_synth_F1_a_nt-bd_dom"/>
</dbReference>
<dbReference type="InterPro" id="IPR005294">
    <property type="entry name" value="ATP_synth_F1_asu"/>
</dbReference>
<dbReference type="InterPro" id="IPR020003">
    <property type="entry name" value="ATPase_a/bsu_AS"/>
</dbReference>
<dbReference type="InterPro" id="IPR004100">
    <property type="entry name" value="ATPase_F1/V1/A1_a/bsu_N"/>
</dbReference>
<dbReference type="InterPro" id="IPR036121">
    <property type="entry name" value="ATPase_F1/V1/A1_a/bsu_N_sf"/>
</dbReference>
<dbReference type="InterPro" id="IPR000194">
    <property type="entry name" value="ATPase_F1/V1/A1_a/bsu_nucl-bd"/>
</dbReference>
<dbReference type="InterPro" id="IPR027417">
    <property type="entry name" value="P-loop_NTPase"/>
</dbReference>
<dbReference type="NCBIfam" id="TIGR00962">
    <property type="entry name" value="atpA"/>
    <property type="match status" value="1"/>
</dbReference>
<dbReference type="NCBIfam" id="NF009884">
    <property type="entry name" value="PRK13343.1"/>
    <property type="match status" value="1"/>
</dbReference>
<dbReference type="PANTHER" id="PTHR48082">
    <property type="entry name" value="ATP SYNTHASE SUBUNIT ALPHA, MITOCHONDRIAL"/>
    <property type="match status" value="1"/>
</dbReference>
<dbReference type="PANTHER" id="PTHR48082:SF2">
    <property type="entry name" value="ATP SYNTHASE SUBUNIT ALPHA, MITOCHONDRIAL"/>
    <property type="match status" value="1"/>
</dbReference>
<dbReference type="Pfam" id="PF00006">
    <property type="entry name" value="ATP-synt_ab"/>
    <property type="match status" value="1"/>
</dbReference>
<dbReference type="Pfam" id="PF00306">
    <property type="entry name" value="ATP-synt_ab_C"/>
    <property type="match status" value="1"/>
</dbReference>
<dbReference type="Pfam" id="PF02874">
    <property type="entry name" value="ATP-synt_ab_N"/>
    <property type="match status" value="1"/>
</dbReference>
<dbReference type="PIRSF" id="PIRSF039088">
    <property type="entry name" value="F_ATPase_subunit_alpha"/>
    <property type="match status" value="1"/>
</dbReference>
<dbReference type="SUPFAM" id="SSF47917">
    <property type="entry name" value="C-terminal domain of alpha and beta subunits of F1 ATP synthase"/>
    <property type="match status" value="1"/>
</dbReference>
<dbReference type="SUPFAM" id="SSF50615">
    <property type="entry name" value="N-terminal domain of alpha and beta subunits of F1 ATP synthase"/>
    <property type="match status" value="1"/>
</dbReference>
<dbReference type="SUPFAM" id="SSF52540">
    <property type="entry name" value="P-loop containing nucleoside triphosphate hydrolases"/>
    <property type="match status" value="1"/>
</dbReference>
<dbReference type="PROSITE" id="PS00152">
    <property type="entry name" value="ATPASE_ALPHA_BETA"/>
    <property type="match status" value="1"/>
</dbReference>
<keyword id="KW-0066">ATP synthesis</keyword>
<keyword id="KW-0067">ATP-binding</keyword>
<keyword id="KW-0997">Cell inner membrane</keyword>
<keyword id="KW-1003">Cell membrane</keyword>
<keyword id="KW-0139">CF(1)</keyword>
<keyword id="KW-0375">Hydrogen ion transport</keyword>
<keyword id="KW-0406">Ion transport</keyword>
<keyword id="KW-0472">Membrane</keyword>
<keyword id="KW-0547">Nucleotide-binding</keyword>
<keyword id="KW-1185">Reference proteome</keyword>
<keyword id="KW-1278">Translocase</keyword>
<keyword id="KW-0813">Transport</keyword>
<protein>
    <recommendedName>
        <fullName evidence="1">ATP synthase subunit alpha</fullName>
        <ecNumber evidence="1">7.1.2.2</ecNumber>
    </recommendedName>
    <alternativeName>
        <fullName evidence="1">ATP synthase F1 sector subunit alpha</fullName>
    </alternativeName>
    <alternativeName>
        <fullName evidence="1">F-ATPase subunit alpha</fullName>
    </alternativeName>
</protein>
<reference key="1">
    <citation type="journal article" date="2003" name="Proc. Natl. Acad. Sci. U.S.A.">
        <title>Complete genome sequence of the Q-fever pathogen, Coxiella burnetii.</title>
        <authorList>
            <person name="Seshadri R."/>
            <person name="Paulsen I.T."/>
            <person name="Eisen J.A."/>
            <person name="Read T.D."/>
            <person name="Nelson K.E."/>
            <person name="Nelson W.C."/>
            <person name="Ward N.L."/>
            <person name="Tettelin H."/>
            <person name="Davidsen T.M."/>
            <person name="Beanan M.J."/>
            <person name="DeBoy R.T."/>
            <person name="Daugherty S.C."/>
            <person name="Brinkac L.M."/>
            <person name="Madupu R."/>
            <person name="Dodson R.J."/>
            <person name="Khouri H.M."/>
            <person name="Lee K.H."/>
            <person name="Carty H.A."/>
            <person name="Scanlan D."/>
            <person name="Heinzen R.A."/>
            <person name="Thompson H.A."/>
            <person name="Samuel J.E."/>
            <person name="Fraser C.M."/>
            <person name="Heidelberg J.F."/>
        </authorList>
    </citation>
    <scope>NUCLEOTIDE SEQUENCE [LARGE SCALE GENOMIC DNA]</scope>
    <source>
        <strain>RSA 493 / Nine Mile phase I</strain>
    </source>
</reference>
<reference key="2">
    <citation type="journal article" date="2007" name="Infect. Immun.">
        <title>Proteome and antigen profiling of Coxiella burnetii developmental forms.</title>
        <authorList>
            <person name="Coleman S.A."/>
            <person name="Fischer E.R."/>
            <person name="Cockrell D.C."/>
            <person name="Voth D.E."/>
            <person name="Howe D."/>
            <person name="Mead D.J."/>
            <person name="Samuel J.E."/>
            <person name="Heinzen R.A."/>
        </authorList>
    </citation>
    <scope>IDENTIFICATION BY MASS SPECTROMETRY</scope>
    <scope>DEVELOPMENTAL STAGE</scope>
    <source>
        <strain>Nine Mile Crazy / RSA 514</strain>
    </source>
</reference>
<evidence type="ECO:0000255" key="1">
    <source>
        <dbReference type="HAMAP-Rule" id="MF_01346"/>
    </source>
</evidence>
<evidence type="ECO:0000269" key="2">
    <source>
    </source>
</evidence>
<gene>
    <name evidence="1" type="primary">atpA</name>
    <name type="ordered locus">CBU_1943</name>
</gene>
<sequence>MSTQLRAAEISDIIESRIEKFGIKAEERTEGTILNIKDGIVRVYGLRDVMFGEMVEFPENTYGLAFNLERDSVGAVVMGPYEHLEEGMTARCTGRILEVPVGEALLGRVVDGLGKPIDGKGPIDTSETSPIEKVAPGVITRKSVDTSLPTGLKSIDAMVPIGRGQRELIIGDRQTGKTAIAIDTIINQKHTGVKCIYVAIGQKQSSVAAVVRKLEEHGAMEHTIVVNASASEAAALQYLAPYAGCTMGEYFRDRGQDALIVYDDLTKQAWAYRQISLLLRRPPGREAYPGDIFYLHSRLLERAAHVNEAYVKEFTKGKVTGKTGSLTALPIIETQAGDVSAFIPTNVISITDGQIYLDVNLFNAGIRPAINAGLSVSRVGGAAQTKIIKKLIGGLRIALAQYRELEAFSQFASDLDEATRKQLEHGQRVMEILKQPQYQPLSVGEMAIIWYVVNNNYLDQVELKKVVDFERSLLSFLRDQHQDLLDEINKNPNYSEKIIEKIKAVVEEFVKTQSY</sequence>
<comment type="function">
    <text evidence="1">Produces ATP from ADP in the presence of a proton gradient across the membrane. The alpha chain is a regulatory subunit.</text>
</comment>
<comment type="catalytic activity">
    <reaction evidence="1">
        <text>ATP + H2O + 4 H(+)(in) = ADP + phosphate + 5 H(+)(out)</text>
        <dbReference type="Rhea" id="RHEA:57720"/>
        <dbReference type="ChEBI" id="CHEBI:15377"/>
        <dbReference type="ChEBI" id="CHEBI:15378"/>
        <dbReference type="ChEBI" id="CHEBI:30616"/>
        <dbReference type="ChEBI" id="CHEBI:43474"/>
        <dbReference type="ChEBI" id="CHEBI:456216"/>
        <dbReference type="EC" id="7.1.2.2"/>
    </reaction>
</comment>
<comment type="subunit">
    <text evidence="1">F-type ATPases have 2 components, CF(1) - the catalytic core - and CF(0) - the membrane proton channel. CF(1) has five subunits: alpha(3), beta(3), gamma(1), delta(1), epsilon(1). CF(0) has three main subunits: a(1), b(2) and c(9-12). The alpha and beta chains form an alternating ring which encloses part of the gamma chain. CF(1) is attached to CF(0) by a central stalk formed by the gamma and epsilon chains, while a peripheral stalk is formed by the delta and b chains.</text>
</comment>
<comment type="subcellular location">
    <subcellularLocation>
        <location evidence="1">Cell inner membrane</location>
        <topology evidence="1">Peripheral membrane protein</topology>
    </subcellularLocation>
</comment>
<comment type="developmental stage">
    <text evidence="2">Detected in both the small cell variant (SCV) and in the large cell variant (LCV) stage (at protein level). LCVs are more metabolically active than SCVs.</text>
</comment>
<comment type="similarity">
    <text evidence="1">Belongs to the ATPase alpha/beta chains family.</text>
</comment>
<name>ATPA_COXBU</name>